<organism>
    <name type="scientific">Methanoregula boonei (strain DSM 21154 / JCM 14090 / 6A8)</name>
    <dbReference type="NCBI Taxonomy" id="456442"/>
    <lineage>
        <taxon>Archaea</taxon>
        <taxon>Methanobacteriati</taxon>
        <taxon>Methanobacteriota</taxon>
        <taxon>Stenosarchaea group</taxon>
        <taxon>Methanomicrobia</taxon>
        <taxon>Methanomicrobiales</taxon>
        <taxon>Methanoregulaceae</taxon>
        <taxon>Methanoregula</taxon>
    </lineage>
</organism>
<accession>A7I4F7</accession>
<keyword id="KW-0479">Metal-binding</keyword>
<keyword id="KW-1185">Reference proteome</keyword>
<keyword id="KW-0687">Ribonucleoprotein</keyword>
<keyword id="KW-0689">Ribosomal protein</keyword>
<keyword id="KW-0694">RNA-binding</keyword>
<keyword id="KW-0699">rRNA-binding</keyword>
<keyword id="KW-0862">Zinc</keyword>
<keyword id="KW-0863">Zinc-finger</keyword>
<proteinExistence type="inferred from homology"/>
<protein>
    <recommendedName>
        <fullName evidence="1">Large ribosomal subunit protein eL37</fullName>
    </recommendedName>
    <alternativeName>
        <fullName evidence="2">50S ribosomal protein L37e</fullName>
    </alternativeName>
</protein>
<evidence type="ECO:0000255" key="1">
    <source>
        <dbReference type="HAMAP-Rule" id="MF_00547"/>
    </source>
</evidence>
<evidence type="ECO:0000305" key="2"/>
<reference key="1">
    <citation type="journal article" date="2015" name="Microbiology">
        <title>Genome of Methanoregula boonei 6A8 reveals adaptations to oligotrophic peatland environments.</title>
        <authorList>
            <person name="Braeuer S."/>
            <person name="Cadillo-Quiroz H."/>
            <person name="Kyrpides N."/>
            <person name="Woyke T."/>
            <person name="Goodwin L."/>
            <person name="Detter C."/>
            <person name="Podell S."/>
            <person name="Yavitt J.B."/>
            <person name="Zinder S.H."/>
        </authorList>
    </citation>
    <scope>NUCLEOTIDE SEQUENCE [LARGE SCALE GENOMIC DNA]</scope>
    <source>
        <strain>DSM 21154 / JCM 14090 / 6A8</strain>
    </source>
</reference>
<name>RL37_METB6</name>
<sequence length="60" mass="6806">MSKGTPSMGKMNKMTHIACRRCGRISFHAQKKVCSSCGFGRSTKMQSFKWDTKRPKTPTH</sequence>
<comment type="function">
    <text evidence="1">Binds to the 23S rRNA.</text>
</comment>
<comment type="cofactor">
    <cofactor evidence="1">
        <name>Zn(2+)</name>
        <dbReference type="ChEBI" id="CHEBI:29105"/>
    </cofactor>
    <text evidence="1">Binds 1 zinc ion per subunit.</text>
</comment>
<comment type="similarity">
    <text evidence="1">Belongs to the eukaryotic ribosomal protein eL37 family.</text>
</comment>
<feature type="chain" id="PRO_1000017760" description="Large ribosomal subunit protein eL37">
    <location>
        <begin position="1"/>
        <end position="60"/>
    </location>
</feature>
<feature type="zinc finger region" description="C4-type" evidence="1">
    <location>
        <begin position="19"/>
        <end position="37"/>
    </location>
</feature>
<feature type="binding site" evidence="1">
    <location>
        <position position="19"/>
    </location>
    <ligand>
        <name>Zn(2+)</name>
        <dbReference type="ChEBI" id="CHEBI:29105"/>
    </ligand>
</feature>
<feature type="binding site" evidence="1">
    <location>
        <position position="22"/>
    </location>
    <ligand>
        <name>Zn(2+)</name>
        <dbReference type="ChEBI" id="CHEBI:29105"/>
    </ligand>
</feature>
<feature type="binding site" evidence="1">
    <location>
        <position position="34"/>
    </location>
    <ligand>
        <name>Zn(2+)</name>
        <dbReference type="ChEBI" id="CHEBI:29105"/>
    </ligand>
</feature>
<feature type="binding site" evidence="1">
    <location>
        <position position="37"/>
    </location>
    <ligand>
        <name>Zn(2+)</name>
        <dbReference type="ChEBI" id="CHEBI:29105"/>
    </ligand>
</feature>
<gene>
    <name evidence="1" type="primary">rpl37e</name>
    <name type="ordered locus">Mboo_0094</name>
</gene>
<dbReference type="EMBL" id="CP000780">
    <property type="protein sequence ID" value="ABS54618.1"/>
    <property type="molecule type" value="Genomic_DNA"/>
</dbReference>
<dbReference type="RefSeq" id="WP_011991106.1">
    <property type="nucleotide sequence ID" value="NC_009712.1"/>
</dbReference>
<dbReference type="SMR" id="A7I4F7"/>
<dbReference type="STRING" id="456442.Mboo_0094"/>
<dbReference type="GeneID" id="5411088"/>
<dbReference type="KEGG" id="mbn:Mboo_0094"/>
<dbReference type="eggNOG" id="arCOG04126">
    <property type="taxonomic scope" value="Archaea"/>
</dbReference>
<dbReference type="HOGENOM" id="CLU_208825_0_0_2"/>
<dbReference type="OrthoDB" id="5619at2157"/>
<dbReference type="Proteomes" id="UP000002408">
    <property type="component" value="Chromosome"/>
</dbReference>
<dbReference type="GO" id="GO:0022625">
    <property type="term" value="C:cytosolic large ribosomal subunit"/>
    <property type="evidence" value="ECO:0007669"/>
    <property type="project" value="TreeGrafter"/>
</dbReference>
<dbReference type="GO" id="GO:0019843">
    <property type="term" value="F:rRNA binding"/>
    <property type="evidence" value="ECO:0007669"/>
    <property type="project" value="UniProtKB-KW"/>
</dbReference>
<dbReference type="GO" id="GO:0003735">
    <property type="term" value="F:structural constituent of ribosome"/>
    <property type="evidence" value="ECO:0007669"/>
    <property type="project" value="InterPro"/>
</dbReference>
<dbReference type="GO" id="GO:0008270">
    <property type="term" value="F:zinc ion binding"/>
    <property type="evidence" value="ECO:0007669"/>
    <property type="project" value="UniProtKB-UniRule"/>
</dbReference>
<dbReference type="GO" id="GO:0006412">
    <property type="term" value="P:translation"/>
    <property type="evidence" value="ECO:0007669"/>
    <property type="project" value="UniProtKB-UniRule"/>
</dbReference>
<dbReference type="FunFam" id="2.20.25.30:FF:000003">
    <property type="entry name" value="50S ribosomal protein L37e"/>
    <property type="match status" value="1"/>
</dbReference>
<dbReference type="Gene3D" id="2.20.25.30">
    <property type="match status" value="1"/>
</dbReference>
<dbReference type="HAMAP" id="MF_00547">
    <property type="entry name" value="Ribosomal_eL37"/>
    <property type="match status" value="1"/>
</dbReference>
<dbReference type="InterPro" id="IPR001569">
    <property type="entry name" value="Ribosomal_eL37"/>
</dbReference>
<dbReference type="InterPro" id="IPR011331">
    <property type="entry name" value="Ribosomal_eL37/eL43"/>
</dbReference>
<dbReference type="InterPro" id="IPR018267">
    <property type="entry name" value="Ribosomal_eL37_CS"/>
</dbReference>
<dbReference type="InterPro" id="IPR011332">
    <property type="entry name" value="Ribosomal_zn-bd"/>
</dbReference>
<dbReference type="NCBIfam" id="NF003214">
    <property type="entry name" value="PRK04179.1"/>
    <property type="match status" value="1"/>
</dbReference>
<dbReference type="PANTHER" id="PTHR10768">
    <property type="entry name" value="60S RIBOSOMAL PROTEIN L37"/>
    <property type="match status" value="1"/>
</dbReference>
<dbReference type="PANTHER" id="PTHR10768:SF0">
    <property type="entry name" value="RIBOSOMAL PROTEIN L37"/>
    <property type="match status" value="1"/>
</dbReference>
<dbReference type="Pfam" id="PF01907">
    <property type="entry name" value="Ribosomal_L37e"/>
    <property type="match status" value="1"/>
</dbReference>
<dbReference type="SUPFAM" id="SSF57829">
    <property type="entry name" value="Zn-binding ribosomal proteins"/>
    <property type="match status" value="1"/>
</dbReference>
<dbReference type="PROSITE" id="PS01077">
    <property type="entry name" value="RIBOSOMAL_L37E"/>
    <property type="match status" value="1"/>
</dbReference>